<reference key="1">
    <citation type="journal article" date="2004" name="J. Bacteriol.">
        <title>Comparative genomics of two Leptospira interrogans serovars reveals novel insights into physiology and pathogenesis.</title>
        <authorList>
            <person name="Nascimento A.L.T.O."/>
            <person name="Ko A.I."/>
            <person name="Martins E.A.L."/>
            <person name="Monteiro-Vitorello C.B."/>
            <person name="Ho P.L."/>
            <person name="Haake D.A."/>
            <person name="Verjovski-Almeida S."/>
            <person name="Hartskeerl R.A."/>
            <person name="Marques M.V."/>
            <person name="Oliveira M.C."/>
            <person name="Menck C.F.M."/>
            <person name="Leite L.C.C."/>
            <person name="Carrer H."/>
            <person name="Coutinho L.L."/>
            <person name="Degrave W.M."/>
            <person name="Dellagostin O.A."/>
            <person name="El-Dorry H."/>
            <person name="Ferro E.S."/>
            <person name="Ferro M.I.T."/>
            <person name="Furlan L.R."/>
            <person name="Gamberini M."/>
            <person name="Giglioti E.A."/>
            <person name="Goes-Neto A."/>
            <person name="Goldman G.H."/>
            <person name="Goldman M.H.S."/>
            <person name="Harakava R."/>
            <person name="Jeronimo S.M.B."/>
            <person name="Junqueira-de-Azevedo I.L.M."/>
            <person name="Kimura E.T."/>
            <person name="Kuramae E.E."/>
            <person name="Lemos E.G.M."/>
            <person name="Lemos M.V.F."/>
            <person name="Marino C.L."/>
            <person name="Nunes L.R."/>
            <person name="de Oliveira R.C."/>
            <person name="Pereira G.G."/>
            <person name="Reis M.S."/>
            <person name="Schriefer A."/>
            <person name="Siqueira W.J."/>
            <person name="Sommer P."/>
            <person name="Tsai S.M."/>
            <person name="Simpson A.J.G."/>
            <person name="Ferro J.A."/>
            <person name="Camargo L.E.A."/>
            <person name="Kitajima J.P."/>
            <person name="Setubal J.C."/>
            <person name="Van Sluys M.A."/>
        </authorList>
    </citation>
    <scope>NUCLEOTIDE SEQUENCE [LARGE SCALE GENOMIC DNA]</scope>
    <source>
        <strain>Fiocruz L1-130</strain>
    </source>
</reference>
<evidence type="ECO:0000255" key="1">
    <source>
        <dbReference type="HAMAP-Rule" id="MF_01325"/>
    </source>
</evidence>
<evidence type="ECO:0000256" key="2">
    <source>
        <dbReference type="SAM" id="MobiDB-lite"/>
    </source>
</evidence>
<evidence type="ECO:0000305" key="3"/>
<comment type="function">
    <text evidence="1">One of the primary rRNA binding proteins, it binds directly near the 3'-end of the 23S rRNA, where it nucleates assembly of the 50S subunit.</text>
</comment>
<comment type="subunit">
    <text evidence="1">Part of the 50S ribosomal subunit. Forms a cluster with proteins L14 and L19.</text>
</comment>
<comment type="similarity">
    <text evidence="1">Belongs to the universal ribosomal protein uL3 family.</text>
</comment>
<name>RL3_LEPIC</name>
<gene>
    <name evidence="1" type="primary">rplC</name>
    <name type="ordered locus">LIC_12873</name>
</gene>
<feature type="chain" id="PRO_0000077112" description="Large ribosomal subunit protein uL3">
    <location>
        <begin position="1"/>
        <end position="206"/>
    </location>
</feature>
<feature type="region of interest" description="Disordered" evidence="2">
    <location>
        <begin position="126"/>
        <end position="155"/>
    </location>
</feature>
<proteinExistence type="inferred from homology"/>
<sequence>MAKGLIGKKVGMSQIFDEQGNIIPVTVLEVGPCAVSQVKSVENDGYEAIQLAFQDIKEIQTSKAEKNHLAKAGLGPKKVLKEFRSFGDSPTAGSVLKIQDVFAVSDVVKVTGVSKGRGYQGVVKRHGHAGGPGAHGSRFHRHPGSMGANSTPSRVFKGVKLPGRTGSQKTTVRNLKVVRINEEKNLLFVSGAVPGTANTVITIEKI</sequence>
<keyword id="KW-0687">Ribonucleoprotein</keyword>
<keyword id="KW-0689">Ribosomal protein</keyword>
<keyword id="KW-0694">RNA-binding</keyword>
<keyword id="KW-0699">rRNA-binding</keyword>
<protein>
    <recommendedName>
        <fullName evidence="1">Large ribosomal subunit protein uL3</fullName>
    </recommendedName>
    <alternativeName>
        <fullName evidence="3">50S ribosomal protein L3</fullName>
    </alternativeName>
</protein>
<accession>Q72NG1</accession>
<dbReference type="EMBL" id="AE016823">
    <property type="protein sequence ID" value="AAS71426.1"/>
    <property type="molecule type" value="Genomic_DNA"/>
</dbReference>
<dbReference type="RefSeq" id="WP_001051846.1">
    <property type="nucleotide sequence ID" value="NC_005823.1"/>
</dbReference>
<dbReference type="SMR" id="Q72NG1"/>
<dbReference type="GeneID" id="61142747"/>
<dbReference type="KEGG" id="lic:LIC_12873"/>
<dbReference type="HOGENOM" id="CLU_044142_4_1_12"/>
<dbReference type="Proteomes" id="UP000007037">
    <property type="component" value="Chromosome I"/>
</dbReference>
<dbReference type="GO" id="GO:0022625">
    <property type="term" value="C:cytosolic large ribosomal subunit"/>
    <property type="evidence" value="ECO:0007669"/>
    <property type="project" value="TreeGrafter"/>
</dbReference>
<dbReference type="GO" id="GO:0019843">
    <property type="term" value="F:rRNA binding"/>
    <property type="evidence" value="ECO:0007669"/>
    <property type="project" value="UniProtKB-UniRule"/>
</dbReference>
<dbReference type="GO" id="GO:0003735">
    <property type="term" value="F:structural constituent of ribosome"/>
    <property type="evidence" value="ECO:0007669"/>
    <property type="project" value="InterPro"/>
</dbReference>
<dbReference type="GO" id="GO:0006412">
    <property type="term" value="P:translation"/>
    <property type="evidence" value="ECO:0007669"/>
    <property type="project" value="UniProtKB-UniRule"/>
</dbReference>
<dbReference type="FunFam" id="2.40.30.10:FF:000004">
    <property type="entry name" value="50S ribosomal protein L3"/>
    <property type="match status" value="1"/>
</dbReference>
<dbReference type="Gene3D" id="3.30.160.810">
    <property type="match status" value="1"/>
</dbReference>
<dbReference type="Gene3D" id="2.40.30.10">
    <property type="entry name" value="Translation factors"/>
    <property type="match status" value="1"/>
</dbReference>
<dbReference type="HAMAP" id="MF_01325_B">
    <property type="entry name" value="Ribosomal_uL3_B"/>
    <property type="match status" value="1"/>
</dbReference>
<dbReference type="InterPro" id="IPR000597">
    <property type="entry name" value="Ribosomal_uL3"/>
</dbReference>
<dbReference type="InterPro" id="IPR019927">
    <property type="entry name" value="Ribosomal_uL3_bac/org-type"/>
</dbReference>
<dbReference type="InterPro" id="IPR009000">
    <property type="entry name" value="Transl_B-barrel_sf"/>
</dbReference>
<dbReference type="NCBIfam" id="TIGR03625">
    <property type="entry name" value="L3_bact"/>
    <property type="match status" value="1"/>
</dbReference>
<dbReference type="PANTHER" id="PTHR11229">
    <property type="entry name" value="50S RIBOSOMAL PROTEIN L3"/>
    <property type="match status" value="1"/>
</dbReference>
<dbReference type="PANTHER" id="PTHR11229:SF16">
    <property type="entry name" value="LARGE RIBOSOMAL SUBUNIT PROTEIN UL3C"/>
    <property type="match status" value="1"/>
</dbReference>
<dbReference type="Pfam" id="PF00297">
    <property type="entry name" value="Ribosomal_L3"/>
    <property type="match status" value="1"/>
</dbReference>
<dbReference type="SUPFAM" id="SSF50447">
    <property type="entry name" value="Translation proteins"/>
    <property type="match status" value="1"/>
</dbReference>
<organism>
    <name type="scientific">Leptospira interrogans serogroup Icterohaemorrhagiae serovar copenhageni (strain Fiocruz L1-130)</name>
    <dbReference type="NCBI Taxonomy" id="267671"/>
    <lineage>
        <taxon>Bacteria</taxon>
        <taxon>Pseudomonadati</taxon>
        <taxon>Spirochaetota</taxon>
        <taxon>Spirochaetia</taxon>
        <taxon>Leptospirales</taxon>
        <taxon>Leptospiraceae</taxon>
        <taxon>Leptospira</taxon>
    </lineage>
</organism>